<name>Y1120_NITEU</name>
<protein>
    <recommendedName>
        <fullName evidence="1">UPF0391 membrane protein NE1120</fullName>
    </recommendedName>
</protein>
<proteinExistence type="inferred from homology"/>
<feature type="chain" id="PRO_0000256755" description="UPF0391 membrane protein NE1120">
    <location>
        <begin position="1"/>
        <end position="55"/>
    </location>
</feature>
<feature type="transmembrane region" description="Helical" evidence="1">
    <location>
        <begin position="4"/>
        <end position="24"/>
    </location>
</feature>
<feature type="transmembrane region" description="Helical" evidence="1">
    <location>
        <begin position="27"/>
        <end position="47"/>
    </location>
</feature>
<organism>
    <name type="scientific">Nitrosomonas europaea (strain ATCC 19718 / CIP 103999 / KCTC 2705 / NBRC 14298)</name>
    <dbReference type="NCBI Taxonomy" id="228410"/>
    <lineage>
        <taxon>Bacteria</taxon>
        <taxon>Pseudomonadati</taxon>
        <taxon>Pseudomonadota</taxon>
        <taxon>Betaproteobacteria</taxon>
        <taxon>Nitrosomonadales</taxon>
        <taxon>Nitrosomonadaceae</taxon>
        <taxon>Nitrosomonas</taxon>
    </lineage>
</organism>
<evidence type="ECO:0000255" key="1">
    <source>
        <dbReference type="HAMAP-Rule" id="MF_01361"/>
    </source>
</evidence>
<keyword id="KW-1003">Cell membrane</keyword>
<keyword id="KW-0472">Membrane</keyword>
<keyword id="KW-1185">Reference proteome</keyword>
<keyword id="KW-0812">Transmembrane</keyword>
<keyword id="KW-1133">Transmembrane helix</keyword>
<comment type="subcellular location">
    <subcellularLocation>
        <location evidence="1">Cell membrane</location>
        <topology evidence="1">Multi-pass membrane protein</topology>
    </subcellularLocation>
</comment>
<comment type="similarity">
    <text evidence="1">Belongs to the UPF0391 family.</text>
</comment>
<sequence>MFNMALVFFLIAVLAGILGFAGIAGTLAWAAKVLFFAGLILTVVFYLLGKRTPPV</sequence>
<gene>
    <name type="ordered locus">NE1120</name>
</gene>
<dbReference type="EMBL" id="AL954747">
    <property type="protein sequence ID" value="CAD85031.1"/>
    <property type="molecule type" value="Genomic_DNA"/>
</dbReference>
<dbReference type="RefSeq" id="WP_011111713.1">
    <property type="nucleotide sequence ID" value="NC_004757.1"/>
</dbReference>
<dbReference type="SMR" id="Q82VG8"/>
<dbReference type="STRING" id="228410.NE1120"/>
<dbReference type="GeneID" id="87105718"/>
<dbReference type="KEGG" id="neu:NE1120"/>
<dbReference type="HOGENOM" id="CLU_187346_2_1_4"/>
<dbReference type="Proteomes" id="UP000001416">
    <property type="component" value="Chromosome"/>
</dbReference>
<dbReference type="GO" id="GO:0005886">
    <property type="term" value="C:plasma membrane"/>
    <property type="evidence" value="ECO:0007669"/>
    <property type="project" value="UniProtKB-SubCell"/>
</dbReference>
<dbReference type="HAMAP" id="MF_01361">
    <property type="entry name" value="UPF0391"/>
    <property type="match status" value="1"/>
</dbReference>
<dbReference type="InterPro" id="IPR009760">
    <property type="entry name" value="DUF1328"/>
</dbReference>
<dbReference type="Pfam" id="PF07043">
    <property type="entry name" value="DUF1328"/>
    <property type="match status" value="1"/>
</dbReference>
<dbReference type="PIRSF" id="PIRSF036466">
    <property type="entry name" value="UCP036466"/>
    <property type="match status" value="1"/>
</dbReference>
<accession>Q82VG8</accession>
<reference key="1">
    <citation type="journal article" date="2003" name="J. Bacteriol.">
        <title>Complete genome sequence of the ammonia-oxidizing bacterium and obligate chemolithoautotroph Nitrosomonas europaea.</title>
        <authorList>
            <person name="Chain P."/>
            <person name="Lamerdin J.E."/>
            <person name="Larimer F.W."/>
            <person name="Regala W."/>
            <person name="Lao V."/>
            <person name="Land M.L."/>
            <person name="Hauser L."/>
            <person name="Hooper A.B."/>
            <person name="Klotz M.G."/>
            <person name="Norton J."/>
            <person name="Sayavedra-Soto L.A."/>
            <person name="Arciero D.M."/>
            <person name="Hommes N.G."/>
            <person name="Whittaker M.M."/>
            <person name="Arp D.J."/>
        </authorList>
    </citation>
    <scope>NUCLEOTIDE SEQUENCE [LARGE SCALE GENOMIC DNA]</scope>
    <source>
        <strain>ATCC 19718 / CIP 103999 / KCTC 2705 / NBRC 14298</strain>
    </source>
</reference>